<organism>
    <name type="scientific">Sodalis glossinidius (strain morsitans)</name>
    <dbReference type="NCBI Taxonomy" id="343509"/>
    <lineage>
        <taxon>Bacteria</taxon>
        <taxon>Pseudomonadati</taxon>
        <taxon>Pseudomonadota</taxon>
        <taxon>Gammaproteobacteria</taxon>
        <taxon>Enterobacterales</taxon>
        <taxon>Bruguierivoracaceae</taxon>
        <taxon>Sodalis</taxon>
    </lineage>
</organism>
<dbReference type="EMBL" id="AP008232">
    <property type="protein sequence ID" value="BAE73686.1"/>
    <property type="molecule type" value="Genomic_DNA"/>
</dbReference>
<dbReference type="SMR" id="Q2NVY9"/>
<dbReference type="STRING" id="343509.SG0411"/>
<dbReference type="KEGG" id="sgl:SG0411"/>
<dbReference type="eggNOG" id="COG3004">
    <property type="taxonomic scope" value="Bacteria"/>
</dbReference>
<dbReference type="HOGENOM" id="CLU_015803_1_0_6"/>
<dbReference type="OrthoDB" id="9808135at2"/>
<dbReference type="BioCyc" id="SGLO343509:SGP1_RS03805-MONOMER"/>
<dbReference type="Proteomes" id="UP000001932">
    <property type="component" value="Chromosome"/>
</dbReference>
<dbReference type="GO" id="GO:0005886">
    <property type="term" value="C:plasma membrane"/>
    <property type="evidence" value="ECO:0007669"/>
    <property type="project" value="UniProtKB-SubCell"/>
</dbReference>
<dbReference type="GO" id="GO:0015385">
    <property type="term" value="F:sodium:proton antiporter activity"/>
    <property type="evidence" value="ECO:0007669"/>
    <property type="project" value="TreeGrafter"/>
</dbReference>
<dbReference type="GO" id="GO:0006885">
    <property type="term" value="P:regulation of pH"/>
    <property type="evidence" value="ECO:0007669"/>
    <property type="project" value="InterPro"/>
</dbReference>
<dbReference type="Gene3D" id="1.20.1530.10">
    <property type="entry name" value="Na+/H+ antiporter like domain"/>
    <property type="match status" value="1"/>
</dbReference>
<dbReference type="HAMAP" id="MF_01844">
    <property type="entry name" value="NhaA"/>
    <property type="match status" value="1"/>
</dbReference>
<dbReference type="InterPro" id="IPR023171">
    <property type="entry name" value="Na/H_antiporter_dom_sf"/>
</dbReference>
<dbReference type="InterPro" id="IPR004670">
    <property type="entry name" value="NhaA"/>
</dbReference>
<dbReference type="NCBIfam" id="TIGR00773">
    <property type="entry name" value="NhaA"/>
    <property type="match status" value="1"/>
</dbReference>
<dbReference type="NCBIfam" id="NF007111">
    <property type="entry name" value="PRK09560.1"/>
    <property type="match status" value="1"/>
</dbReference>
<dbReference type="NCBIfam" id="NF007112">
    <property type="entry name" value="PRK09561.1"/>
    <property type="match status" value="1"/>
</dbReference>
<dbReference type="PANTHER" id="PTHR30341:SF0">
    <property type="entry name" value="NA(+)_H(+) ANTIPORTER NHAA"/>
    <property type="match status" value="1"/>
</dbReference>
<dbReference type="PANTHER" id="PTHR30341">
    <property type="entry name" value="SODIUM ION/PROTON ANTIPORTER NHAA-RELATED"/>
    <property type="match status" value="1"/>
</dbReference>
<dbReference type="Pfam" id="PF06965">
    <property type="entry name" value="Na_H_antiport_1"/>
    <property type="match status" value="1"/>
</dbReference>
<reference key="1">
    <citation type="journal article" date="2006" name="Genome Res.">
        <title>Massive genome erosion and functional adaptations provide insights into the symbiotic lifestyle of Sodalis glossinidius in the tsetse host.</title>
        <authorList>
            <person name="Toh H."/>
            <person name="Weiss B.L."/>
            <person name="Perkin S.A.H."/>
            <person name="Yamashita A."/>
            <person name="Oshima K."/>
            <person name="Hattori M."/>
            <person name="Aksoy S."/>
        </authorList>
    </citation>
    <scope>NUCLEOTIDE SEQUENCE [LARGE SCALE GENOMIC DNA]</scope>
    <source>
        <strain>morsitans</strain>
    </source>
</reference>
<keyword id="KW-0050">Antiport</keyword>
<keyword id="KW-0997">Cell inner membrane</keyword>
<keyword id="KW-1003">Cell membrane</keyword>
<keyword id="KW-0406">Ion transport</keyword>
<keyword id="KW-0472">Membrane</keyword>
<keyword id="KW-0915">Sodium</keyword>
<keyword id="KW-0739">Sodium transport</keyword>
<keyword id="KW-0812">Transmembrane</keyword>
<keyword id="KW-1133">Transmembrane helix</keyword>
<keyword id="KW-0813">Transport</keyword>
<accession>Q2NVY9</accession>
<gene>
    <name evidence="1" type="primary">nhaA</name>
    <name type="ordered locus">SG0411</name>
</gene>
<comment type="function">
    <text evidence="1">Na(+)/H(+) antiporter that extrudes sodium in exchange for external protons.</text>
</comment>
<comment type="catalytic activity">
    <reaction evidence="1">
        <text>Na(+)(in) + 2 H(+)(out) = Na(+)(out) + 2 H(+)(in)</text>
        <dbReference type="Rhea" id="RHEA:29251"/>
        <dbReference type="ChEBI" id="CHEBI:15378"/>
        <dbReference type="ChEBI" id="CHEBI:29101"/>
    </reaction>
    <physiologicalReaction direction="left-to-right" evidence="1">
        <dbReference type="Rhea" id="RHEA:29252"/>
    </physiologicalReaction>
</comment>
<comment type="subcellular location">
    <subcellularLocation>
        <location evidence="1">Cell inner membrane</location>
        <topology evidence="1">Multi-pass membrane protein</topology>
    </subcellularLocation>
</comment>
<comment type="similarity">
    <text evidence="1">Belongs to the NhaA Na(+)/H(+) (TC 2.A.33) antiporter family.</text>
</comment>
<proteinExistence type="inferred from homology"/>
<protein>
    <recommendedName>
        <fullName evidence="1">Na(+)/H(+) antiporter NhaA</fullName>
    </recommendedName>
    <alternativeName>
        <fullName evidence="1">Sodium/proton antiporter NhaA</fullName>
    </alternativeName>
</protein>
<sequence>MIAASLRRMITHPAAGGVLLFAAALAAIVMANTDARALYNAIIYFPAQSASATPSHLSLLVLVNDGLMAVFFLAVGLEVKYELLQGALNSRVRAAFPAIAALGGMVAPAVIYSLMTAGTPALRAGWAIPAATDIAFAVGVLALLGTRVPVSLKVFMLALAIIDDLGAIVIIALFYNTALEPLALAAAGAVIGIMALMNRANVRFLSLYLLLGAVLWGCILLSGIHATLAGVVVGGLIPLTLPSTEVSPARALEHWLQPWVVYLILPLFAFANAGISLQGVAPGHLISFLPLGIAAGLVVGKPLGIVLFTAVAVKLRLARLPAGIAFRHIAAAAMLCGIGFTMSIFIANLAFGHDDPETIVLAKVGILSGSVIAALLGYLLLRAILPQPQGSGSVPVGG</sequence>
<evidence type="ECO:0000255" key="1">
    <source>
        <dbReference type="HAMAP-Rule" id="MF_01844"/>
    </source>
</evidence>
<name>NHAA_SODGM</name>
<feature type="chain" id="PRO_0000334440" description="Na(+)/H(+) antiporter NhaA">
    <location>
        <begin position="1"/>
        <end position="398"/>
    </location>
</feature>
<feature type="transmembrane region" description="Helical" evidence="1">
    <location>
        <begin position="9"/>
        <end position="29"/>
    </location>
</feature>
<feature type="transmembrane region" description="Helical" evidence="1">
    <location>
        <begin position="57"/>
        <end position="77"/>
    </location>
</feature>
<feature type="transmembrane region" description="Helical" evidence="1">
    <location>
        <begin position="95"/>
        <end position="115"/>
    </location>
</feature>
<feature type="transmembrane region" description="Helical" evidence="1">
    <location>
        <begin position="124"/>
        <end position="144"/>
    </location>
</feature>
<feature type="transmembrane region" description="Helical" evidence="1">
    <location>
        <begin position="154"/>
        <end position="174"/>
    </location>
</feature>
<feature type="transmembrane region" description="Helical" evidence="1">
    <location>
        <begin position="177"/>
        <end position="197"/>
    </location>
</feature>
<feature type="transmembrane region" description="Helical" evidence="1">
    <location>
        <begin position="204"/>
        <end position="224"/>
    </location>
</feature>
<feature type="transmembrane region" description="Helical" evidence="1">
    <location>
        <begin position="226"/>
        <end position="246"/>
    </location>
</feature>
<feature type="transmembrane region" description="Helical" evidence="1">
    <location>
        <begin position="255"/>
        <end position="275"/>
    </location>
</feature>
<feature type="transmembrane region" description="Helical" evidence="1">
    <location>
        <begin position="288"/>
        <end position="308"/>
    </location>
</feature>
<feature type="transmembrane region" description="Helical" evidence="1">
    <location>
        <begin position="329"/>
        <end position="349"/>
    </location>
</feature>
<feature type="transmembrane region" description="Helical" evidence="1">
    <location>
        <begin position="359"/>
        <end position="379"/>
    </location>
</feature>